<sequence>MDLRVGRKFRIGRKIGSGSFGDIYHGTNLISGEEVAIKLESIRSRHPQLDYESRVYRYLSGGVGIPFIRWFGREGEYNAMVIDLLGPSLEDLFNYCHRRFSFKTVIMLALQMFCRIQYIHGRSFIHRDIKPDNFLMGVGRRGSTVHVIDFGLSKKYRDFNTHRHIPYRENKSLTGTARYASVNTHLGIEQSRRDDLESLGYVLIYFCKGSLPWQGLKATTKKQKYDRIMEKKLNVSVETLCSGLPLEFQEYMAYCKNLKFDEKPDYLFLARLFKDLSIKLEYHNDHLFDWTMLRYTKAMVEKQRDLLIEKGDLNANSNAASASNSTDNKSETFNKIKLLAMKKFPTHFHYYKNEDKHNPSPEEIKQQTILNNNAASSLPEELLNALDKGMENLRQQQPQQQVQSSQPQPQPQQLQQQPNGQRPNYYPEPLLQQQQRDSQEQQQQVPMATTRATQYPPQINSNNFNTNQASVPPQMRSNPQQPPQDKPAGQSIWL</sequence>
<organism>
    <name type="scientific">Saccharomyces cerevisiae (strain ATCC 204508 / S288c)</name>
    <name type="common">Baker's yeast</name>
    <dbReference type="NCBI Taxonomy" id="559292"/>
    <lineage>
        <taxon>Eukaryota</taxon>
        <taxon>Fungi</taxon>
        <taxon>Dikarya</taxon>
        <taxon>Ascomycota</taxon>
        <taxon>Saccharomycotina</taxon>
        <taxon>Saccharomycetes</taxon>
        <taxon>Saccharomycetales</taxon>
        <taxon>Saccharomycetaceae</taxon>
        <taxon>Saccharomyces</taxon>
    </lineage>
</organism>
<evidence type="ECO:0000255" key="1">
    <source>
        <dbReference type="PROSITE-ProRule" id="PRU00159"/>
    </source>
</evidence>
<evidence type="ECO:0000255" key="2">
    <source>
        <dbReference type="PROSITE-ProRule" id="PRU10027"/>
    </source>
</evidence>
<evidence type="ECO:0000256" key="3">
    <source>
        <dbReference type="SAM" id="MobiDB-lite"/>
    </source>
</evidence>
<evidence type="ECO:0000269" key="4">
    <source>
    </source>
</evidence>
<evidence type="ECO:0000269" key="5">
    <source>
    </source>
</evidence>
<evidence type="ECO:0000269" key="6">
    <source>
    </source>
</evidence>
<evidence type="ECO:0000269" key="7">
    <source>
    </source>
</evidence>
<evidence type="ECO:0000269" key="8">
    <source>
    </source>
</evidence>
<evidence type="ECO:0000269" key="9">
    <source>
    </source>
</evidence>
<evidence type="ECO:0000305" key="10"/>
<evidence type="ECO:0007744" key="11">
    <source>
    </source>
</evidence>
<evidence type="ECO:0007829" key="12">
    <source>
        <dbReference type="PDB" id="4XHL"/>
    </source>
</evidence>
<evidence type="ECO:0007829" key="13">
    <source>
        <dbReference type="PDB" id="5CYZ"/>
    </source>
</evidence>
<evidence type="ECO:0007829" key="14">
    <source>
        <dbReference type="PDB" id="5CZO"/>
    </source>
</evidence>
<dbReference type="EC" id="2.7.11.1" evidence="6"/>
<dbReference type="EMBL" id="M68605">
    <property type="protein sequence ID" value="AAA34687.1"/>
    <property type="molecule type" value="Genomic_DNA"/>
</dbReference>
<dbReference type="EMBL" id="Z73560">
    <property type="protein sequence ID" value="CAA97918.1"/>
    <property type="molecule type" value="Genomic_DNA"/>
</dbReference>
<dbReference type="EMBL" id="BK006949">
    <property type="protein sequence ID" value="DAA11231.1"/>
    <property type="molecule type" value="Genomic_DNA"/>
</dbReference>
<dbReference type="PIR" id="A40860">
    <property type="entry name" value="A40860"/>
</dbReference>
<dbReference type="RefSeq" id="NP_015120.1">
    <property type="nucleotide sequence ID" value="NM_001184018.1"/>
</dbReference>
<dbReference type="PDB" id="4XHL">
    <property type="method" value="X-ray"/>
    <property type="resolution" value="3.01 A"/>
    <property type="chains" value="A=1-394"/>
</dbReference>
<dbReference type="PDB" id="5CYZ">
    <property type="method" value="X-ray"/>
    <property type="resolution" value="1.84 A"/>
    <property type="chains" value="A=1-394"/>
</dbReference>
<dbReference type="PDB" id="5CZO">
    <property type="method" value="X-ray"/>
    <property type="resolution" value="2.89 A"/>
    <property type="chains" value="A/B=1-394"/>
</dbReference>
<dbReference type="PDBsum" id="4XHL"/>
<dbReference type="PDBsum" id="5CYZ"/>
<dbReference type="PDBsum" id="5CZO"/>
<dbReference type="SMR" id="P29295"/>
<dbReference type="BioGRID" id="35980">
    <property type="interactions" value="635"/>
</dbReference>
<dbReference type="ComplexPortal" id="CPX-1681">
    <property type="entry name" value="Monopolin complex"/>
</dbReference>
<dbReference type="DIP" id="DIP-157N"/>
<dbReference type="FunCoup" id="P29295">
    <property type="interactions" value="1334"/>
</dbReference>
<dbReference type="IntAct" id="P29295">
    <property type="interactions" value="151"/>
</dbReference>
<dbReference type="MINT" id="P29295"/>
<dbReference type="STRING" id="4932.YPL204W"/>
<dbReference type="GlyGen" id="P29295">
    <property type="glycosylation" value="2 sites, 1 O-linked glycan (2 sites)"/>
</dbReference>
<dbReference type="iPTMnet" id="P29295"/>
<dbReference type="PaxDb" id="4932-YPL204W"/>
<dbReference type="PeptideAtlas" id="P29295"/>
<dbReference type="EnsemblFungi" id="YPL204W_mRNA">
    <property type="protein sequence ID" value="YPL204W"/>
    <property type="gene ID" value="YPL204W"/>
</dbReference>
<dbReference type="GeneID" id="855897"/>
<dbReference type="KEGG" id="sce:YPL204W"/>
<dbReference type="AGR" id="SGD:S000006125"/>
<dbReference type="SGD" id="S000006125">
    <property type="gene designation" value="HRR25"/>
</dbReference>
<dbReference type="VEuPathDB" id="FungiDB:YPL204W"/>
<dbReference type="eggNOG" id="KOG1164">
    <property type="taxonomic scope" value="Eukaryota"/>
</dbReference>
<dbReference type="GeneTree" id="ENSGT00940000176141"/>
<dbReference type="HOGENOM" id="CLU_019279_2_7_1"/>
<dbReference type="InParanoid" id="P29295"/>
<dbReference type="OMA" id="ESRVYKY"/>
<dbReference type="OrthoDB" id="5800476at2759"/>
<dbReference type="BioCyc" id="YEAST:G3O-34096-MONOMER"/>
<dbReference type="BRENDA" id="2.7.11.1">
    <property type="organism ID" value="984"/>
</dbReference>
<dbReference type="Reactome" id="R-SCE-204005">
    <property type="pathway name" value="COPII-mediated vesicle transport"/>
</dbReference>
<dbReference type="BioGRID-ORCS" id="855897">
    <property type="hits" value="6 hits in 13 CRISPR screens"/>
</dbReference>
<dbReference type="CD-CODE" id="876000F7">
    <property type="entry name" value="Centrosome"/>
</dbReference>
<dbReference type="CD-CODE" id="A777E0F8">
    <property type="entry name" value="P-body"/>
</dbReference>
<dbReference type="PRO" id="PR:P29295"/>
<dbReference type="Proteomes" id="UP000002311">
    <property type="component" value="Chromosome XVI"/>
</dbReference>
<dbReference type="RNAct" id="P29295">
    <property type="molecule type" value="protein"/>
</dbReference>
<dbReference type="GO" id="GO:0005935">
    <property type="term" value="C:cellular bud neck"/>
    <property type="evidence" value="ECO:0000314"/>
    <property type="project" value="SGD"/>
</dbReference>
<dbReference type="GO" id="GO:0005934">
    <property type="term" value="C:cellular bud tip"/>
    <property type="evidence" value="ECO:0000314"/>
    <property type="project" value="SGD"/>
</dbReference>
<dbReference type="GO" id="GO:0000775">
    <property type="term" value="C:chromosome, centromeric region"/>
    <property type="evidence" value="ECO:0000314"/>
    <property type="project" value="SGD"/>
</dbReference>
<dbReference type="GO" id="GO:0005737">
    <property type="term" value="C:cytoplasm"/>
    <property type="evidence" value="ECO:0007005"/>
    <property type="project" value="SGD"/>
</dbReference>
<dbReference type="GO" id="GO:0005829">
    <property type="term" value="C:cytosol"/>
    <property type="evidence" value="ECO:0007005"/>
    <property type="project" value="SGD"/>
</dbReference>
<dbReference type="GO" id="GO:0005794">
    <property type="term" value="C:Golgi apparatus"/>
    <property type="evidence" value="ECO:0000314"/>
    <property type="project" value="SGD"/>
</dbReference>
<dbReference type="GO" id="GO:0033551">
    <property type="term" value="C:monopolin complex"/>
    <property type="evidence" value="ECO:0000314"/>
    <property type="project" value="SGD"/>
</dbReference>
<dbReference type="GO" id="GO:0005730">
    <property type="term" value="C:nucleolus"/>
    <property type="evidence" value="ECO:0007669"/>
    <property type="project" value="UniProtKB-SubCell"/>
</dbReference>
<dbReference type="GO" id="GO:0005654">
    <property type="term" value="C:nucleoplasm"/>
    <property type="evidence" value="ECO:0007669"/>
    <property type="project" value="UniProtKB-SubCell"/>
</dbReference>
<dbReference type="GO" id="GO:0005634">
    <property type="term" value="C:nucleus"/>
    <property type="evidence" value="ECO:0000314"/>
    <property type="project" value="SGD"/>
</dbReference>
<dbReference type="GO" id="GO:0000932">
    <property type="term" value="C:P-body"/>
    <property type="evidence" value="ECO:0000314"/>
    <property type="project" value="SGD"/>
</dbReference>
<dbReference type="GO" id="GO:0005886">
    <property type="term" value="C:plasma membrane"/>
    <property type="evidence" value="ECO:0000314"/>
    <property type="project" value="SGD"/>
</dbReference>
<dbReference type="GO" id="GO:0030688">
    <property type="term" value="C:preribosome, small subunit precursor"/>
    <property type="evidence" value="ECO:0000314"/>
    <property type="project" value="GO_Central"/>
</dbReference>
<dbReference type="GO" id="GO:0005816">
    <property type="term" value="C:spindle pole body"/>
    <property type="evidence" value="ECO:0000314"/>
    <property type="project" value="SGD"/>
</dbReference>
<dbReference type="GO" id="GO:0005524">
    <property type="term" value="F:ATP binding"/>
    <property type="evidence" value="ECO:0007669"/>
    <property type="project" value="UniProtKB-KW"/>
</dbReference>
<dbReference type="GO" id="GO:0042802">
    <property type="term" value="F:identical protein binding"/>
    <property type="evidence" value="ECO:0000353"/>
    <property type="project" value="IntAct"/>
</dbReference>
<dbReference type="GO" id="GO:0004672">
    <property type="term" value="F:protein kinase activity"/>
    <property type="evidence" value="ECO:0007005"/>
    <property type="project" value="SGD"/>
</dbReference>
<dbReference type="GO" id="GO:0106310">
    <property type="term" value="F:protein serine kinase activity"/>
    <property type="evidence" value="ECO:0007669"/>
    <property type="project" value="RHEA"/>
</dbReference>
<dbReference type="GO" id="GO:0004674">
    <property type="term" value="F:protein serine/threonine kinase activity"/>
    <property type="evidence" value="ECO:0000314"/>
    <property type="project" value="SGD"/>
</dbReference>
<dbReference type="GO" id="GO:0004713">
    <property type="term" value="F:protein tyrosine kinase activity"/>
    <property type="evidence" value="ECO:0000314"/>
    <property type="project" value="SGD"/>
</dbReference>
<dbReference type="GO" id="GO:0006281">
    <property type="term" value="P:DNA repair"/>
    <property type="evidence" value="ECO:0000315"/>
    <property type="project" value="SGD"/>
</dbReference>
<dbReference type="GO" id="GO:0006897">
    <property type="term" value="P:endocytosis"/>
    <property type="evidence" value="ECO:0000318"/>
    <property type="project" value="GO_Central"/>
</dbReference>
<dbReference type="GO" id="GO:0045132">
    <property type="term" value="P:meiotic chromosome segregation"/>
    <property type="evidence" value="ECO:0000303"/>
    <property type="project" value="ComplexPortal"/>
</dbReference>
<dbReference type="GO" id="GO:0000425">
    <property type="term" value="P:pexophagy"/>
    <property type="evidence" value="ECO:0000315"/>
    <property type="project" value="SGD"/>
</dbReference>
<dbReference type="GO" id="GO:2000370">
    <property type="term" value="P:positive regulation of clathrin-dependent endocytosis"/>
    <property type="evidence" value="ECO:0000315"/>
    <property type="project" value="SGD"/>
</dbReference>
<dbReference type="GO" id="GO:2000785">
    <property type="term" value="P:regulation of autophagosome assembly"/>
    <property type="evidence" value="ECO:0000315"/>
    <property type="project" value="SGD"/>
</dbReference>
<dbReference type="GO" id="GO:0006282">
    <property type="term" value="P:regulation of DNA repair"/>
    <property type="evidence" value="ECO:0000318"/>
    <property type="project" value="GO_Central"/>
</dbReference>
<dbReference type="GO" id="GO:0060628">
    <property type="term" value="P:regulation of ER to Golgi vesicle-mediated transport"/>
    <property type="evidence" value="ECO:0000314"/>
    <property type="project" value="SGD"/>
</dbReference>
<dbReference type="GO" id="GO:0032880">
    <property type="term" value="P:regulation of protein localization"/>
    <property type="evidence" value="ECO:0000315"/>
    <property type="project" value="SGD"/>
</dbReference>
<dbReference type="GO" id="GO:2001159">
    <property type="term" value="P:regulation of protein localization by the Cvt pathway"/>
    <property type="evidence" value="ECO:0000315"/>
    <property type="project" value="SGD"/>
</dbReference>
<dbReference type="GO" id="GO:0106214">
    <property type="term" value="P:regulation of vesicle fusion with Golgi apparatus"/>
    <property type="evidence" value="ECO:0000315"/>
    <property type="project" value="SGD"/>
</dbReference>
<dbReference type="GO" id="GO:0042273">
    <property type="term" value="P:ribosomal large subunit biogenesis"/>
    <property type="evidence" value="ECO:0000315"/>
    <property type="project" value="SGD"/>
</dbReference>
<dbReference type="GO" id="GO:0042274">
    <property type="term" value="P:ribosomal small subunit biogenesis"/>
    <property type="evidence" value="ECO:0000314"/>
    <property type="project" value="SGD"/>
</dbReference>
<dbReference type="GO" id="GO:0007165">
    <property type="term" value="P:signal transduction"/>
    <property type="evidence" value="ECO:0000318"/>
    <property type="project" value="GO_Central"/>
</dbReference>
<dbReference type="GO" id="GO:0051455">
    <property type="term" value="P:spindle attachment to meiosis I kinetochore"/>
    <property type="evidence" value="ECO:0000315"/>
    <property type="project" value="SGD"/>
</dbReference>
<dbReference type="GO" id="GO:0002098">
    <property type="term" value="P:tRNA wobble uridine modification"/>
    <property type="evidence" value="ECO:0000315"/>
    <property type="project" value="SGD"/>
</dbReference>
<dbReference type="FunFam" id="1.10.510.10:FF:000635">
    <property type="entry name" value="Casein kinase I"/>
    <property type="match status" value="1"/>
</dbReference>
<dbReference type="FunFam" id="3.30.200.20:FF:000538">
    <property type="entry name" value="Putative Casein kinase I"/>
    <property type="match status" value="1"/>
</dbReference>
<dbReference type="Gene3D" id="1.10.510.10">
    <property type="entry name" value="Transferase(Phosphotransferase) domain 1"/>
    <property type="match status" value="1"/>
</dbReference>
<dbReference type="InterPro" id="IPR050235">
    <property type="entry name" value="CK1_Ser-Thr_kinase"/>
</dbReference>
<dbReference type="InterPro" id="IPR011009">
    <property type="entry name" value="Kinase-like_dom_sf"/>
</dbReference>
<dbReference type="InterPro" id="IPR000719">
    <property type="entry name" value="Prot_kinase_dom"/>
</dbReference>
<dbReference type="InterPro" id="IPR017441">
    <property type="entry name" value="Protein_kinase_ATP_BS"/>
</dbReference>
<dbReference type="InterPro" id="IPR008271">
    <property type="entry name" value="Ser/Thr_kinase_AS"/>
</dbReference>
<dbReference type="PANTHER" id="PTHR11909">
    <property type="entry name" value="CASEIN KINASE-RELATED"/>
    <property type="match status" value="1"/>
</dbReference>
<dbReference type="Pfam" id="PF00069">
    <property type="entry name" value="Pkinase"/>
    <property type="match status" value="1"/>
</dbReference>
<dbReference type="SMART" id="SM00220">
    <property type="entry name" value="S_TKc"/>
    <property type="match status" value="1"/>
</dbReference>
<dbReference type="SUPFAM" id="SSF56112">
    <property type="entry name" value="Protein kinase-like (PK-like)"/>
    <property type="match status" value="1"/>
</dbReference>
<dbReference type="PROSITE" id="PS00107">
    <property type="entry name" value="PROTEIN_KINASE_ATP"/>
    <property type="match status" value="1"/>
</dbReference>
<dbReference type="PROSITE" id="PS50011">
    <property type="entry name" value="PROTEIN_KINASE_DOM"/>
    <property type="match status" value="1"/>
</dbReference>
<dbReference type="PROSITE" id="PS00108">
    <property type="entry name" value="PROTEIN_KINASE_ST"/>
    <property type="match status" value="1"/>
</dbReference>
<keyword id="KW-0002">3D-structure</keyword>
<keyword id="KW-0067">ATP-binding</keyword>
<keyword id="KW-0963">Cytoplasm</keyword>
<keyword id="KW-0227">DNA damage</keyword>
<keyword id="KW-0234">DNA repair</keyword>
<keyword id="KW-0418">Kinase</keyword>
<keyword id="KW-0547">Nucleotide-binding</keyword>
<keyword id="KW-0539">Nucleus</keyword>
<keyword id="KW-0597">Phosphoprotein</keyword>
<keyword id="KW-1185">Reference proteome</keyword>
<keyword id="KW-0723">Serine/threonine-protein kinase</keyword>
<keyword id="KW-0808">Transferase</keyword>
<proteinExistence type="evidence at protein level"/>
<protein>
    <recommendedName>
        <fullName>Casein kinase I homolog HRR25</fullName>
        <ecNumber evidence="6">2.7.11.1</ecNumber>
    </recommendedName>
</protein>
<feature type="chain" id="PRO_0000192859" description="Casein kinase I homolog HRR25">
    <location>
        <begin position="1"/>
        <end position="494"/>
    </location>
</feature>
<feature type="domain" description="Protein kinase" evidence="1">
    <location>
        <begin position="9"/>
        <end position="278"/>
    </location>
</feature>
<feature type="region of interest" description="Disordered" evidence="3">
    <location>
        <begin position="394"/>
        <end position="494"/>
    </location>
</feature>
<feature type="compositionally biased region" description="Low complexity" evidence="3">
    <location>
        <begin position="395"/>
        <end position="418"/>
    </location>
</feature>
<feature type="compositionally biased region" description="Low complexity" evidence="3">
    <location>
        <begin position="432"/>
        <end position="444"/>
    </location>
</feature>
<feature type="compositionally biased region" description="Polar residues" evidence="3">
    <location>
        <begin position="445"/>
        <end position="479"/>
    </location>
</feature>
<feature type="active site" description="Proton acceptor" evidence="1 2">
    <location>
        <position position="128"/>
    </location>
</feature>
<feature type="binding site" evidence="1">
    <location>
        <begin position="15"/>
        <end position="23"/>
    </location>
    <ligand>
        <name>ATP</name>
        <dbReference type="ChEBI" id="CHEBI:30616"/>
    </ligand>
</feature>
<feature type="binding site" evidence="1">
    <location>
        <position position="38"/>
    </location>
    <ligand>
        <name>ATP</name>
        <dbReference type="ChEBI" id="CHEBI:30616"/>
    </ligand>
</feature>
<feature type="modified residue" description="Phosphoserine" evidence="11">
    <location>
        <position position="143"/>
    </location>
</feature>
<feature type="strand" evidence="13">
    <location>
        <begin position="9"/>
        <end position="17"/>
    </location>
</feature>
<feature type="strand" evidence="13">
    <location>
        <begin position="22"/>
        <end position="28"/>
    </location>
</feature>
<feature type="turn" evidence="13">
    <location>
        <begin position="29"/>
        <end position="31"/>
    </location>
</feature>
<feature type="strand" evidence="13">
    <location>
        <begin position="34"/>
        <end position="41"/>
    </location>
</feature>
<feature type="turn" evidence="12">
    <location>
        <begin position="42"/>
        <end position="45"/>
    </location>
</feature>
<feature type="helix" evidence="13">
    <location>
        <begin position="49"/>
        <end position="58"/>
    </location>
</feature>
<feature type="turn" evidence="13">
    <location>
        <begin position="59"/>
        <end position="61"/>
    </location>
</feature>
<feature type="strand" evidence="13">
    <location>
        <begin position="68"/>
        <end position="74"/>
    </location>
</feature>
<feature type="strand" evidence="13">
    <location>
        <begin position="77"/>
        <end position="83"/>
    </location>
</feature>
<feature type="strand" evidence="13">
    <location>
        <begin position="85"/>
        <end position="88"/>
    </location>
</feature>
<feature type="helix" evidence="13">
    <location>
        <begin position="89"/>
        <end position="95"/>
    </location>
</feature>
<feature type="turn" evidence="13">
    <location>
        <begin position="96"/>
        <end position="98"/>
    </location>
</feature>
<feature type="helix" evidence="13">
    <location>
        <begin position="102"/>
        <end position="121"/>
    </location>
</feature>
<feature type="helix" evidence="14">
    <location>
        <begin position="131"/>
        <end position="133"/>
    </location>
</feature>
<feature type="strand" evidence="13">
    <location>
        <begin position="134"/>
        <end position="138"/>
    </location>
</feature>
<feature type="helix" evidence="13">
    <location>
        <begin position="139"/>
        <end position="141"/>
    </location>
</feature>
<feature type="strand" evidence="13">
    <location>
        <begin position="145"/>
        <end position="147"/>
    </location>
</feature>
<feature type="turn" evidence="13">
    <location>
        <begin position="159"/>
        <end position="161"/>
    </location>
</feature>
<feature type="helix" evidence="13">
    <location>
        <begin position="177"/>
        <end position="179"/>
    </location>
</feature>
<feature type="helix" evidence="13">
    <location>
        <begin position="182"/>
        <end position="185"/>
    </location>
</feature>
<feature type="helix" evidence="13">
    <location>
        <begin position="192"/>
        <end position="208"/>
    </location>
</feature>
<feature type="turn" evidence="13">
    <location>
        <begin position="212"/>
        <end position="215"/>
    </location>
</feature>
<feature type="helix" evidence="13">
    <location>
        <begin position="224"/>
        <end position="230"/>
    </location>
</feature>
<feature type="helix" evidence="13">
    <location>
        <begin position="237"/>
        <end position="240"/>
    </location>
</feature>
<feature type="turn" evidence="13">
    <location>
        <begin position="241"/>
        <end position="243"/>
    </location>
</feature>
<feature type="helix" evidence="13">
    <location>
        <begin position="246"/>
        <end position="255"/>
    </location>
</feature>
<feature type="helix" evidence="13">
    <location>
        <begin position="266"/>
        <end position="273"/>
    </location>
</feature>
<feature type="turn" evidence="13">
    <location>
        <begin position="276"/>
        <end position="278"/>
    </location>
</feature>
<feature type="helix" evidence="13">
    <location>
        <begin position="289"/>
        <end position="307"/>
    </location>
</feature>
<feature type="helix" evidence="13">
    <location>
        <begin position="330"/>
        <end position="334"/>
    </location>
</feature>
<feature type="helix" evidence="13">
    <location>
        <begin position="339"/>
        <end position="343"/>
    </location>
</feature>
<feature type="turn" evidence="13">
    <location>
        <begin position="345"/>
        <end position="347"/>
    </location>
</feature>
<feature type="helix" evidence="13">
    <location>
        <begin position="361"/>
        <end position="364"/>
    </location>
</feature>
<feature type="helix" evidence="13">
    <location>
        <begin position="367"/>
        <end position="373"/>
    </location>
</feature>
<feature type="helix" evidence="13">
    <location>
        <begin position="379"/>
        <end position="386"/>
    </location>
</feature>
<comment type="function">
    <text evidence="6 7 9">Protein kinase which phosphorylates serine and threonine residues (PubMed:1495994). Can use casein as a substrate (PubMed:1495994). Phosphorylates elongator complex member ELP1/IKI3 on 'Ser-1198' and 'Ser-1202' which promotes the tRNA modification function of the complex (PubMed:25569479). Associated with repair of damaged DNA and meiosis (PubMed:1887218).</text>
</comment>
<comment type="catalytic activity">
    <reaction evidence="6">
        <text>L-seryl-[protein] + ATP = O-phospho-L-seryl-[protein] + ADP + H(+)</text>
        <dbReference type="Rhea" id="RHEA:17989"/>
        <dbReference type="Rhea" id="RHEA-COMP:9863"/>
        <dbReference type="Rhea" id="RHEA-COMP:11604"/>
        <dbReference type="ChEBI" id="CHEBI:15378"/>
        <dbReference type="ChEBI" id="CHEBI:29999"/>
        <dbReference type="ChEBI" id="CHEBI:30616"/>
        <dbReference type="ChEBI" id="CHEBI:83421"/>
        <dbReference type="ChEBI" id="CHEBI:456216"/>
        <dbReference type="EC" id="2.7.11.1"/>
    </reaction>
</comment>
<comment type="catalytic activity">
    <reaction evidence="6">
        <text>L-threonyl-[protein] + ATP = O-phospho-L-threonyl-[protein] + ADP + H(+)</text>
        <dbReference type="Rhea" id="RHEA:46608"/>
        <dbReference type="Rhea" id="RHEA-COMP:11060"/>
        <dbReference type="Rhea" id="RHEA-COMP:11605"/>
        <dbReference type="ChEBI" id="CHEBI:15378"/>
        <dbReference type="ChEBI" id="CHEBI:30013"/>
        <dbReference type="ChEBI" id="CHEBI:30616"/>
        <dbReference type="ChEBI" id="CHEBI:61977"/>
        <dbReference type="ChEBI" id="CHEBI:456216"/>
        <dbReference type="EC" id="2.7.11.1"/>
    </reaction>
</comment>
<comment type="subunit">
    <text evidence="8">Interacts with HRI1 (PubMed:21460040). Interacts with ELP1/IKI3; the interaction leads to ELP1/IKI3 phosphorylation (PubMed:21460040).</text>
</comment>
<comment type="interaction">
    <interactant intactId="EBI-8536">
        <id>P29295</id>
    </interactant>
    <interactant intactId="EBI-29291">
        <id>P35193</id>
        <label>ATG19</label>
    </interactant>
    <organismsDiffer>false</organismsDiffer>
    <experiments>2</experiments>
</comment>
<comment type="interaction">
    <interactant intactId="EBI-8536">
        <id>P29295</id>
    </interactant>
    <interactant intactId="EBI-36362">
        <id>Q12292</id>
        <label>ATG34</label>
    </interactant>
    <organismsDiffer>false</organismsDiffer>
    <experiments>2</experiments>
</comment>
<comment type="interaction">
    <interactant intactId="EBI-8536">
        <id>P29295</id>
    </interactant>
    <interactant intactId="EBI-330">
        <id>P15442</id>
        <label>GCN2</label>
    </interactant>
    <organismsDiffer>false</organismsDiffer>
    <experiments>5</experiments>
</comment>
<comment type="interaction">
    <interactant intactId="EBI-8536">
        <id>P29295</id>
    </interactant>
    <interactant intactId="EBI-8536">
        <id>P29295</id>
        <label>HRR25</label>
    </interactant>
    <organismsDiffer>false</organismsDiffer>
    <experiments>3</experiments>
</comment>
<comment type="interaction">
    <interactant intactId="EBI-8536">
        <id>P29295</id>
    </interactant>
    <interactant intactId="EBI-22643">
        <id>P40065</id>
        <label>MAM1</label>
    </interactant>
    <organismsDiffer>false</organismsDiffer>
    <experiments>3</experiments>
</comment>
<comment type="interaction">
    <interactant intactId="EBI-8536">
        <id>P29295</id>
    </interactant>
    <interactant intactId="EBI-9796">
        <id>P36003</id>
        <label>NNK1</label>
    </interactant>
    <organismsDiffer>false</organismsDiffer>
    <experiments>4</experiments>
</comment>
<comment type="interaction">
    <interactant intactId="EBI-8536">
        <id>P29295</id>
    </interactant>
    <interactant intactId="EBI-16584">
        <id>P15303</id>
        <label>SEC23</label>
    </interactant>
    <organismsDiffer>false</organismsDiffer>
    <experiments>5</experiments>
</comment>
<comment type="subcellular location">
    <subcellularLocation>
        <location evidence="4">Cytoplasm</location>
    </subcellularLocation>
    <subcellularLocation>
        <location evidence="4">Nucleus</location>
        <location evidence="4">Nucleolus</location>
    </subcellularLocation>
    <subcellularLocation>
        <location evidence="4">Nucleus</location>
        <location evidence="4">Nucleoplasm</location>
    </subcellularLocation>
</comment>
<comment type="miscellaneous">
    <text evidence="5">Present with 10300 molecules/cell in log phase SD medium.</text>
</comment>
<comment type="similarity">
    <text evidence="10">Belongs to the protein kinase superfamily. CK1 Ser/Thr protein kinase family. Casein kinase I subfamily.</text>
</comment>
<reference key="1">
    <citation type="journal article" date="1991" name="Science">
        <title>HRR25, a putative protein kinase from budding yeast: association with repair of damaged DNA.</title>
        <authorList>
            <person name="Hoekstra M.F."/>
            <person name="Liskay R.M."/>
            <person name="Ou A.C."/>
            <person name="Demaggio A.J."/>
            <person name="Burbee D.G."/>
            <person name="Heffron F."/>
        </authorList>
    </citation>
    <scope>NUCLEOTIDE SEQUENCE [GENOMIC DNA]</scope>
    <scope>FUNCTION</scope>
</reference>
<reference key="2">
    <citation type="journal article" date="1997" name="Nature">
        <title>The nucleotide sequence of Saccharomyces cerevisiae chromosome XVI.</title>
        <authorList>
            <person name="Bussey H."/>
            <person name="Storms R.K."/>
            <person name="Ahmed A."/>
            <person name="Albermann K."/>
            <person name="Allen E."/>
            <person name="Ansorge W."/>
            <person name="Araujo R."/>
            <person name="Aparicio A."/>
            <person name="Barrell B.G."/>
            <person name="Badcock K."/>
            <person name="Benes V."/>
            <person name="Botstein D."/>
            <person name="Bowman S."/>
            <person name="Brueckner M."/>
            <person name="Carpenter J."/>
            <person name="Cherry J.M."/>
            <person name="Chung E."/>
            <person name="Churcher C.M."/>
            <person name="Coster F."/>
            <person name="Davis K."/>
            <person name="Davis R.W."/>
            <person name="Dietrich F.S."/>
            <person name="Delius H."/>
            <person name="DiPaolo T."/>
            <person name="Dubois E."/>
            <person name="Duesterhoeft A."/>
            <person name="Duncan M."/>
            <person name="Floeth M."/>
            <person name="Fortin N."/>
            <person name="Friesen J.D."/>
            <person name="Fritz C."/>
            <person name="Goffeau A."/>
            <person name="Hall J."/>
            <person name="Hebling U."/>
            <person name="Heumann K."/>
            <person name="Hilbert H."/>
            <person name="Hillier L.W."/>
            <person name="Hunicke-Smith S."/>
            <person name="Hyman R.W."/>
            <person name="Johnston M."/>
            <person name="Kalman S."/>
            <person name="Kleine K."/>
            <person name="Komp C."/>
            <person name="Kurdi O."/>
            <person name="Lashkari D."/>
            <person name="Lew H."/>
            <person name="Lin A."/>
            <person name="Lin D."/>
            <person name="Louis E.J."/>
            <person name="Marathe R."/>
            <person name="Messenguy F."/>
            <person name="Mewes H.-W."/>
            <person name="Mirtipati S."/>
            <person name="Moestl D."/>
            <person name="Mueller-Auer S."/>
            <person name="Namath A."/>
            <person name="Nentwich U."/>
            <person name="Oefner P."/>
            <person name="Pearson D."/>
            <person name="Petel F.X."/>
            <person name="Pohl T.M."/>
            <person name="Purnelle B."/>
            <person name="Rajandream M.A."/>
            <person name="Rechmann S."/>
            <person name="Rieger M."/>
            <person name="Riles L."/>
            <person name="Roberts D."/>
            <person name="Schaefer M."/>
            <person name="Scharfe M."/>
            <person name="Scherens B."/>
            <person name="Schramm S."/>
            <person name="Schroeder M."/>
            <person name="Sdicu A.-M."/>
            <person name="Tettelin H."/>
            <person name="Urrestarazu L.A."/>
            <person name="Ushinsky S."/>
            <person name="Vierendeels F."/>
            <person name="Vissers S."/>
            <person name="Voss H."/>
            <person name="Walsh S.V."/>
            <person name="Wambutt R."/>
            <person name="Wang Y."/>
            <person name="Wedler E."/>
            <person name="Wedler H."/>
            <person name="Winnett E."/>
            <person name="Zhong W.-W."/>
            <person name="Zollner A."/>
            <person name="Vo D.H."/>
            <person name="Hani J."/>
        </authorList>
    </citation>
    <scope>NUCLEOTIDE SEQUENCE [LARGE SCALE GENOMIC DNA]</scope>
    <source>
        <strain>ATCC 204508 / S288c</strain>
    </source>
</reference>
<reference key="3">
    <citation type="journal article" date="2014" name="G3 (Bethesda)">
        <title>The reference genome sequence of Saccharomyces cerevisiae: Then and now.</title>
        <authorList>
            <person name="Engel S.R."/>
            <person name="Dietrich F.S."/>
            <person name="Fisk D.G."/>
            <person name="Binkley G."/>
            <person name="Balakrishnan R."/>
            <person name="Costanzo M.C."/>
            <person name="Dwight S.S."/>
            <person name="Hitz B.C."/>
            <person name="Karra K."/>
            <person name="Nash R.S."/>
            <person name="Weng S."/>
            <person name="Wong E.D."/>
            <person name="Lloyd P."/>
            <person name="Skrzypek M.S."/>
            <person name="Miyasato S.R."/>
            <person name="Simison M."/>
            <person name="Cherry J.M."/>
        </authorList>
    </citation>
    <scope>GENOME REANNOTATION</scope>
    <source>
        <strain>ATCC 204508 / S288c</strain>
    </source>
</reference>
<reference key="4">
    <citation type="journal article" date="1992" name="Proc. Natl. Acad. Sci. U.S.A.">
        <title>The budding yeast HRR25 gene product is a casein kinase I isoform.</title>
        <authorList>
            <person name="Demaggio A.J."/>
            <person name="Lindberg R.A."/>
            <person name="Hunter T."/>
            <person name="Hoekstra M.F."/>
        </authorList>
    </citation>
    <scope>FUNCTION</scope>
    <scope>CATALYTIC ACTIVITY</scope>
</reference>
<reference key="5">
    <citation type="journal article" date="2003" name="EMBO J.">
        <title>The path from nucleolar 90S to cytoplasmic 40S pre-ribosomes.</title>
        <authorList>
            <person name="Schaefer T."/>
            <person name="Strauss D."/>
            <person name="Petfalski E."/>
            <person name="Tollervey D."/>
            <person name="Hurt E."/>
        </authorList>
    </citation>
    <scope>SUBCELLULAR LOCATION</scope>
</reference>
<reference key="6">
    <citation type="journal article" date="2003" name="Nature">
        <title>Global analysis of protein expression in yeast.</title>
        <authorList>
            <person name="Ghaemmaghami S."/>
            <person name="Huh W.-K."/>
            <person name="Bower K."/>
            <person name="Howson R.W."/>
            <person name="Belle A."/>
            <person name="Dephoure N."/>
            <person name="O'Shea E.K."/>
            <person name="Weissman J.S."/>
        </authorList>
    </citation>
    <scope>LEVEL OF PROTEIN EXPRESSION [LARGE SCALE ANALYSIS]</scope>
</reference>
<reference key="7">
    <citation type="journal article" date="2007" name="J. Proteome Res.">
        <title>Large-scale phosphorylation analysis of alpha-factor-arrested Saccharomyces cerevisiae.</title>
        <authorList>
            <person name="Li X."/>
            <person name="Gerber S.A."/>
            <person name="Rudner A.D."/>
            <person name="Beausoleil S.A."/>
            <person name="Haas W."/>
            <person name="Villen J."/>
            <person name="Elias J.E."/>
            <person name="Gygi S.P."/>
        </authorList>
    </citation>
    <scope>PHOSPHORYLATION [LARGE SCALE ANALYSIS] AT SER-143</scope>
    <scope>IDENTIFICATION BY MASS SPECTROMETRY [LARGE SCALE ANALYSIS]</scope>
    <source>
        <strain>ADR376</strain>
    </source>
</reference>
<reference key="8">
    <citation type="journal article" date="2009" name="Science">
        <title>Global analysis of Cdk1 substrate phosphorylation sites provides insights into evolution.</title>
        <authorList>
            <person name="Holt L.J."/>
            <person name="Tuch B.B."/>
            <person name="Villen J."/>
            <person name="Johnson A.D."/>
            <person name="Gygi S.P."/>
            <person name="Morgan D.O."/>
        </authorList>
    </citation>
    <scope>IDENTIFICATION BY MASS SPECTROMETRY [LARGE SCALE ANALYSIS]</scope>
</reference>
<reference key="9">
    <citation type="journal article" date="2011" name="Genes Dev.">
        <title>Diverse protein kinase interactions identified by protein microarrays reveal novel connections between cellular processes.</title>
        <authorList>
            <person name="Fasolo J."/>
            <person name="Sboner A."/>
            <person name="Sun M.G."/>
            <person name="Yu H."/>
            <person name="Chen R."/>
            <person name="Sharon D."/>
            <person name="Kim P.M."/>
            <person name="Gerstein M."/>
            <person name="Snyder M."/>
        </authorList>
    </citation>
    <scope>INTERACTION WITH HRI1</scope>
</reference>
<reference key="10">
    <citation type="journal article" date="2015" name="PLoS Genet.">
        <title>Phosphorylation of Elp1 by Hrr25 is required for elongator-dependent tRNA modification in yeast.</title>
        <authorList>
            <person name="Abdel-Fattah W."/>
            <person name="Jablonowski D."/>
            <person name="Di Santo R."/>
            <person name="Thuering K.L."/>
            <person name="Scheidt V."/>
            <person name="Hammermeister A."/>
            <person name="Ten Have S."/>
            <person name="Helm M."/>
            <person name="Schaffrath R."/>
            <person name="Stark M.J."/>
        </authorList>
    </citation>
    <scope>FUNCTION</scope>
    <scope>INTERACTION WITH ELP1</scope>
</reference>
<name>HRR25_YEAST</name>
<accession>P29295</accession>
<accession>D6W3G5</accession>
<gene>
    <name type="primary">HRR25</name>
    <name type="ordered locus">YPL204W</name>
</gene>